<reference key="1">
    <citation type="journal article" date="2006" name="Mol. Microbiol.">
        <title>Role of pathogenicity island-associated integrases in the genome plasticity of uropathogenic Escherichia coli strain 536.</title>
        <authorList>
            <person name="Hochhut B."/>
            <person name="Wilde C."/>
            <person name="Balling G."/>
            <person name="Middendorf B."/>
            <person name="Dobrindt U."/>
            <person name="Brzuszkiewicz E."/>
            <person name="Gottschalk G."/>
            <person name="Carniel E."/>
            <person name="Hacker J."/>
        </authorList>
    </citation>
    <scope>NUCLEOTIDE SEQUENCE [LARGE SCALE GENOMIC DNA]</scope>
    <source>
        <strain>536 / UPEC</strain>
    </source>
</reference>
<dbReference type="EC" id="3.1.11.6" evidence="1"/>
<dbReference type="EMBL" id="CP000247">
    <property type="protein sequence ID" value="ABG68512.1"/>
    <property type="molecule type" value="Genomic_DNA"/>
</dbReference>
<dbReference type="RefSeq" id="WP_001124933.1">
    <property type="nucleotide sequence ID" value="NC_008253.1"/>
</dbReference>
<dbReference type="SMR" id="Q0TKL9"/>
<dbReference type="KEGG" id="ecp:ECP_0481"/>
<dbReference type="HOGENOM" id="CLU_145918_3_3_6"/>
<dbReference type="Proteomes" id="UP000009182">
    <property type="component" value="Chromosome"/>
</dbReference>
<dbReference type="GO" id="GO:0005829">
    <property type="term" value="C:cytosol"/>
    <property type="evidence" value="ECO:0007669"/>
    <property type="project" value="TreeGrafter"/>
</dbReference>
<dbReference type="GO" id="GO:0009318">
    <property type="term" value="C:exodeoxyribonuclease VII complex"/>
    <property type="evidence" value="ECO:0007669"/>
    <property type="project" value="InterPro"/>
</dbReference>
<dbReference type="GO" id="GO:0008855">
    <property type="term" value="F:exodeoxyribonuclease VII activity"/>
    <property type="evidence" value="ECO:0007669"/>
    <property type="project" value="UniProtKB-UniRule"/>
</dbReference>
<dbReference type="GO" id="GO:0006308">
    <property type="term" value="P:DNA catabolic process"/>
    <property type="evidence" value="ECO:0007669"/>
    <property type="project" value="UniProtKB-UniRule"/>
</dbReference>
<dbReference type="FunFam" id="1.10.287.1040:FF:000001">
    <property type="entry name" value="Exodeoxyribonuclease 7 small subunit"/>
    <property type="match status" value="1"/>
</dbReference>
<dbReference type="Gene3D" id="1.10.287.1040">
    <property type="entry name" value="Exonuclease VII, small subunit"/>
    <property type="match status" value="1"/>
</dbReference>
<dbReference type="HAMAP" id="MF_00337">
    <property type="entry name" value="Exonuc_7_S"/>
    <property type="match status" value="1"/>
</dbReference>
<dbReference type="InterPro" id="IPR003761">
    <property type="entry name" value="Exonuc_VII_S"/>
</dbReference>
<dbReference type="InterPro" id="IPR037004">
    <property type="entry name" value="Exonuc_VII_ssu_sf"/>
</dbReference>
<dbReference type="NCBIfam" id="NF002137">
    <property type="entry name" value="PRK00977.1-1"/>
    <property type="match status" value="1"/>
</dbReference>
<dbReference type="NCBIfam" id="NF002140">
    <property type="entry name" value="PRK00977.1-4"/>
    <property type="match status" value="1"/>
</dbReference>
<dbReference type="NCBIfam" id="TIGR01280">
    <property type="entry name" value="xseB"/>
    <property type="match status" value="1"/>
</dbReference>
<dbReference type="PANTHER" id="PTHR34137">
    <property type="entry name" value="EXODEOXYRIBONUCLEASE 7 SMALL SUBUNIT"/>
    <property type="match status" value="1"/>
</dbReference>
<dbReference type="PANTHER" id="PTHR34137:SF1">
    <property type="entry name" value="EXODEOXYRIBONUCLEASE 7 SMALL SUBUNIT"/>
    <property type="match status" value="1"/>
</dbReference>
<dbReference type="Pfam" id="PF02609">
    <property type="entry name" value="Exonuc_VII_S"/>
    <property type="match status" value="1"/>
</dbReference>
<dbReference type="PIRSF" id="PIRSF006488">
    <property type="entry name" value="Exonuc_VII_S"/>
    <property type="match status" value="1"/>
</dbReference>
<dbReference type="SUPFAM" id="SSF116842">
    <property type="entry name" value="XseB-like"/>
    <property type="match status" value="1"/>
</dbReference>
<sequence>MPKKNEAPASFEKALSELEQIVTHLESGDLPLEEALNEFERGVQLARQGQAKLQQAEQRVQILLSDNEDASLTPFTPDNE</sequence>
<comment type="function">
    <text evidence="1">Bidirectionally degrades single-stranded DNA into large acid-insoluble oligonucleotides, which are then degraded further into small acid-soluble oligonucleotides.</text>
</comment>
<comment type="catalytic activity">
    <reaction evidence="1">
        <text>Exonucleolytic cleavage in either 5'- to 3'- or 3'- to 5'-direction to yield nucleoside 5'-phosphates.</text>
        <dbReference type="EC" id="3.1.11.6"/>
    </reaction>
</comment>
<comment type="subunit">
    <text evidence="1">Heterooligomer composed of large and small subunits.</text>
</comment>
<comment type="subcellular location">
    <subcellularLocation>
        <location evidence="1">Cytoplasm</location>
    </subcellularLocation>
</comment>
<comment type="similarity">
    <text evidence="1">Belongs to the XseB family.</text>
</comment>
<keyword id="KW-0963">Cytoplasm</keyword>
<keyword id="KW-0269">Exonuclease</keyword>
<keyword id="KW-0378">Hydrolase</keyword>
<keyword id="KW-0540">Nuclease</keyword>
<protein>
    <recommendedName>
        <fullName evidence="1">Exodeoxyribonuclease 7 small subunit</fullName>
        <ecNumber evidence="1">3.1.11.6</ecNumber>
    </recommendedName>
    <alternativeName>
        <fullName evidence="1">Exodeoxyribonuclease VII small subunit</fullName>
        <shortName evidence="1">Exonuclease VII small subunit</shortName>
    </alternativeName>
</protein>
<proteinExistence type="inferred from homology"/>
<evidence type="ECO:0000255" key="1">
    <source>
        <dbReference type="HAMAP-Rule" id="MF_00337"/>
    </source>
</evidence>
<organism>
    <name type="scientific">Escherichia coli O6:K15:H31 (strain 536 / UPEC)</name>
    <dbReference type="NCBI Taxonomy" id="362663"/>
    <lineage>
        <taxon>Bacteria</taxon>
        <taxon>Pseudomonadati</taxon>
        <taxon>Pseudomonadota</taxon>
        <taxon>Gammaproteobacteria</taxon>
        <taxon>Enterobacterales</taxon>
        <taxon>Enterobacteriaceae</taxon>
        <taxon>Escherichia</taxon>
    </lineage>
</organism>
<name>EX7S_ECOL5</name>
<accession>Q0TKL9</accession>
<feature type="chain" id="PRO_0000303707" description="Exodeoxyribonuclease 7 small subunit">
    <location>
        <begin position="1"/>
        <end position="80"/>
    </location>
</feature>
<gene>
    <name evidence="1" type="primary">xseB</name>
    <name type="ordered locus">ECP_0481</name>
</gene>